<proteinExistence type="uncertain"/>
<gene>
    <name type="primary">yedS</name>
    <name type="ordered locus">b4496</name>
    <name type="ordered locus">JW5319/JW1948/JW1949</name>
    <name type="ORF">b1964/b1965/b1966</name>
</gene>
<comment type="subcellular location">
    <subcellularLocation>
        <location evidence="1">Cell outer membrane</location>
        <topology evidence="1">Multi-pass membrane protein</topology>
    </subcellularLocation>
</comment>
<comment type="similarity">
    <text evidence="3">Belongs to the Gram-negative porin family.</text>
</comment>
<comment type="caution">
    <text evidence="3">Could be the product of a pseudogene, it is missing the C-terminus compared to orthologs. An example of a full-length E.coli protein is (AC J9RX10).</text>
</comment>
<sequence length="161" mass="17296">MKRKVLAMLVPALLVAGAANAAEVYNKDGNKLDLYGKVVGLHYFSDDSGSDGDMSYARIGFKGETQIADQFTGYGQWEFNIGANGPESDKGNTATRLAFAGLGFGQNGTFDYGRNYGVVYDVEAWTDMLPEFGGDTYAGADNFMNGRANGVATYRNNGFFG</sequence>
<name>YEDS_ECOLI</name>
<evidence type="ECO:0000250" key="1"/>
<evidence type="ECO:0000255" key="2"/>
<evidence type="ECO:0000305" key="3"/>
<accession>P76335</accession>
<accession>O07986</accession>
<accession>P76336</accession>
<accession>P76337</accession>
<accession>P94747</accession>
<accession>P94748</accession>
<keyword id="KW-0998">Cell outer membrane</keyword>
<keyword id="KW-0406">Ion transport</keyword>
<keyword id="KW-0472">Membrane</keyword>
<keyword id="KW-0626">Porin</keyword>
<keyword id="KW-1185">Reference proteome</keyword>
<keyword id="KW-0732">Signal</keyword>
<keyword id="KW-0812">Transmembrane</keyword>
<keyword id="KW-1134">Transmembrane beta strand</keyword>
<keyword id="KW-0813">Transport</keyword>
<feature type="signal peptide" evidence="2">
    <location>
        <begin position="1"/>
        <end position="21"/>
    </location>
</feature>
<feature type="chain" id="PRO_0000025257" description="Putative outer membrane protein YedS">
    <location>
        <begin position="22"/>
        <end position="161"/>
    </location>
</feature>
<organism>
    <name type="scientific">Escherichia coli (strain K12)</name>
    <dbReference type="NCBI Taxonomy" id="83333"/>
    <lineage>
        <taxon>Bacteria</taxon>
        <taxon>Pseudomonadati</taxon>
        <taxon>Pseudomonadota</taxon>
        <taxon>Gammaproteobacteria</taxon>
        <taxon>Enterobacterales</taxon>
        <taxon>Enterobacteriaceae</taxon>
        <taxon>Escherichia</taxon>
    </lineage>
</organism>
<dbReference type="EMBL" id="U00096">
    <property type="status" value="NOT_ANNOTATED_CDS"/>
    <property type="molecule type" value="Genomic_DNA"/>
</dbReference>
<dbReference type="EMBL" id="AP009048">
    <property type="status" value="NOT_ANNOTATED_CDS"/>
    <property type="molecule type" value="Genomic_DNA"/>
</dbReference>
<dbReference type="SMR" id="P76335"/>
<dbReference type="FunCoup" id="P76335">
    <property type="interactions" value="11"/>
</dbReference>
<dbReference type="IntAct" id="P76335">
    <property type="interactions" value="1"/>
</dbReference>
<dbReference type="EchoBASE" id="EB3796"/>
<dbReference type="InParanoid" id="P76335"/>
<dbReference type="PhylomeDB" id="P76335"/>
<dbReference type="Proteomes" id="UP000000625">
    <property type="component" value="Chromosome"/>
</dbReference>
<dbReference type="GO" id="GO:0009279">
    <property type="term" value="C:cell outer membrane"/>
    <property type="evidence" value="ECO:0007669"/>
    <property type="project" value="UniProtKB-SubCell"/>
</dbReference>
<dbReference type="GO" id="GO:0046930">
    <property type="term" value="C:pore complex"/>
    <property type="evidence" value="ECO:0000318"/>
    <property type="project" value="GO_Central"/>
</dbReference>
<dbReference type="GO" id="GO:0015288">
    <property type="term" value="F:porin activity"/>
    <property type="evidence" value="ECO:0000318"/>
    <property type="project" value="GO_Central"/>
</dbReference>
<dbReference type="GO" id="GO:0034220">
    <property type="term" value="P:monoatomic ion transmembrane transport"/>
    <property type="evidence" value="ECO:0007669"/>
    <property type="project" value="InterPro"/>
</dbReference>
<dbReference type="CDD" id="cd00342">
    <property type="entry name" value="gram_neg_porins"/>
    <property type="match status" value="1"/>
</dbReference>
<dbReference type="Gene3D" id="2.40.160.10">
    <property type="entry name" value="Porin"/>
    <property type="match status" value="1"/>
</dbReference>
<dbReference type="InterPro" id="IPR050298">
    <property type="entry name" value="Gram-neg_bact_OMP"/>
</dbReference>
<dbReference type="InterPro" id="IPR033900">
    <property type="entry name" value="Gram_neg_porin_domain"/>
</dbReference>
<dbReference type="InterPro" id="IPR023614">
    <property type="entry name" value="Porin_dom_sf"/>
</dbReference>
<dbReference type="InterPro" id="IPR001897">
    <property type="entry name" value="Porin_gammaproteobac"/>
</dbReference>
<dbReference type="InterPro" id="IPR001702">
    <property type="entry name" value="Porin_Gram-ve"/>
</dbReference>
<dbReference type="PANTHER" id="PTHR34501:SF8">
    <property type="entry name" value="OUTER MEMBRANE PORIN N-RELATED"/>
    <property type="match status" value="1"/>
</dbReference>
<dbReference type="PANTHER" id="PTHR34501">
    <property type="entry name" value="PROTEIN YDDL-RELATED"/>
    <property type="match status" value="1"/>
</dbReference>
<dbReference type="Pfam" id="PF00267">
    <property type="entry name" value="Porin_1"/>
    <property type="match status" value="1"/>
</dbReference>
<dbReference type="PRINTS" id="PR00183">
    <property type="entry name" value="ECOLIPORIN"/>
</dbReference>
<dbReference type="PRINTS" id="PR00182">
    <property type="entry name" value="ECOLNEIPORIN"/>
</dbReference>
<dbReference type="SUPFAM" id="SSF56935">
    <property type="entry name" value="Porins"/>
    <property type="match status" value="1"/>
</dbReference>
<reference key="1">
    <citation type="journal article" date="1996" name="DNA Res.">
        <title>A 460-kb DNA sequence of the Escherichia coli K-12 genome corresponding to the 40.1-50.0 min region on the linkage map.</title>
        <authorList>
            <person name="Itoh T."/>
            <person name="Aiba H."/>
            <person name="Baba T."/>
            <person name="Fujita K."/>
            <person name="Hayashi K."/>
            <person name="Inada T."/>
            <person name="Isono K."/>
            <person name="Kasai H."/>
            <person name="Kimura S."/>
            <person name="Kitakawa M."/>
            <person name="Kitagawa M."/>
            <person name="Makino K."/>
            <person name="Miki T."/>
            <person name="Mizobuchi K."/>
            <person name="Mori H."/>
            <person name="Mori T."/>
            <person name="Motomura K."/>
            <person name="Nakade S."/>
            <person name="Nakamura Y."/>
            <person name="Nashimoto H."/>
            <person name="Nishio Y."/>
            <person name="Oshima T."/>
            <person name="Saito N."/>
            <person name="Sampei G."/>
            <person name="Seki Y."/>
            <person name="Sivasundaram S."/>
            <person name="Tagami H."/>
            <person name="Takeda J."/>
            <person name="Takemoto K."/>
            <person name="Wada C."/>
            <person name="Yamamoto Y."/>
            <person name="Horiuchi T."/>
        </authorList>
    </citation>
    <scope>NUCLEOTIDE SEQUENCE [LARGE SCALE GENOMIC DNA]</scope>
    <source>
        <strain>K12 / W3110 / ATCC 27325 / DSM 5911</strain>
    </source>
</reference>
<reference key="2">
    <citation type="journal article" date="1997" name="Science">
        <title>The complete genome sequence of Escherichia coli K-12.</title>
        <authorList>
            <person name="Blattner F.R."/>
            <person name="Plunkett G. III"/>
            <person name="Bloch C.A."/>
            <person name="Perna N.T."/>
            <person name="Burland V."/>
            <person name="Riley M."/>
            <person name="Collado-Vides J."/>
            <person name="Glasner J.D."/>
            <person name="Rode C.K."/>
            <person name="Mayhew G.F."/>
            <person name="Gregor J."/>
            <person name="Davis N.W."/>
            <person name="Kirkpatrick H.A."/>
            <person name="Goeden M.A."/>
            <person name="Rose D.J."/>
            <person name="Mau B."/>
            <person name="Shao Y."/>
        </authorList>
    </citation>
    <scope>NUCLEOTIDE SEQUENCE [LARGE SCALE GENOMIC DNA]</scope>
    <source>
        <strain>K12 / MG1655 / ATCC 47076</strain>
    </source>
</reference>
<reference key="3">
    <citation type="journal article" date="2006" name="Mol. Syst. Biol.">
        <title>Highly accurate genome sequences of Escherichia coli K-12 strains MG1655 and W3110.</title>
        <authorList>
            <person name="Hayashi K."/>
            <person name="Morooka N."/>
            <person name="Yamamoto Y."/>
            <person name="Fujita K."/>
            <person name="Isono K."/>
            <person name="Choi S."/>
            <person name="Ohtsubo E."/>
            <person name="Baba T."/>
            <person name="Wanner B.L."/>
            <person name="Mori H."/>
            <person name="Horiuchi T."/>
        </authorList>
    </citation>
    <scope>NUCLEOTIDE SEQUENCE [LARGE SCALE GENOMIC DNA]</scope>
    <source>
        <strain>K12 / W3110 / ATCC 27325 / DSM 5911</strain>
    </source>
</reference>
<protein>
    <recommendedName>
        <fullName>Putative outer membrane protein YedS</fullName>
    </recommendedName>
</protein>